<protein>
    <recommendedName>
        <fullName evidence="1">Packaging protein 1</fullName>
    </recommendedName>
    <alternativeName>
        <fullName evidence="1">Packaging protein IVa2</fullName>
    </alternativeName>
</protein>
<feature type="chain" id="PRO_0000221884" description="Packaging protein 1">
    <location>
        <begin position="1"/>
        <end position="449"/>
    </location>
</feature>
<feature type="region of interest" description="Disordered" evidence="2">
    <location>
        <begin position="1"/>
        <end position="78"/>
    </location>
</feature>
<feature type="region of interest" description="DNA-binding" evidence="1">
    <location>
        <begin position="440"/>
        <end position="449"/>
    </location>
</feature>
<feature type="binding site" evidence="1">
    <location>
        <begin position="171"/>
        <end position="178"/>
    </location>
    <ligand>
        <name>ATP</name>
        <dbReference type="ChEBI" id="CHEBI:30616"/>
    </ligand>
</feature>
<feature type="sequence conflict" description="In Ref. 3; no nucleotide entry." ref="3">
    <original>H</original>
    <variation>Q</variation>
    <location>
        <position position="163"/>
    </location>
</feature>
<name>PKG1_ADE05</name>
<sequence>METRGRRPAALQHQQDQPQAHPGQRAARSAPLHRDPDYADEDPAPVERHDPGPSGRAPTTAVQRKPPQPAKRGDMLDRDAVEQVTELWDRLELLGQTLKSMPTADGLKPLKNFASLQELLSLGGERLLADLVRENMRVRDMLNEVAPLLRDDGSCSSLNYQLHPVIGVIYGPTGCGKSQLLRNLLSSQLISPTPETVFFIAPQVDMIPPSELKAWEMQICEGNYAPGPDGTIIPQSGTLRPRFVKMAYDDLILEHNYDVSDPRNIFAQAAARGPIAIIMDECMENLGGHKGVSKFFHAFPSKLHDKFPKCTGYTVLVVLHNMNPRRDMAGNIANLKIQSKMHLISPRMHPSQLNRFVNTYTKGLPLAISLLLKDIFRHHAQRSCYDWIIYNTTPQHEALQWCYLHPRDGLMPMYLNIQSHLYHVLEKIHRTLNDRDRWSRAYRARKTPK</sequence>
<reference key="1">
    <citation type="journal article" date="1981" name="Gene">
        <title>The nucleotide sequence of the gene for protein IVa2 and of the 5' leader segment of the major late mRNAs of adenovirus type 5.</title>
        <authorList>
            <person name="van Beveren C.P."/>
            <person name="Maat J."/>
            <person name="Dekker B.M.M."/>
            <person name="van Ormondt H."/>
        </authorList>
    </citation>
    <scope>NUCLEOTIDE SEQUENCE [GENOMIC DNA]</scope>
</reference>
<reference key="2">
    <citation type="journal article" date="1992" name="Virology">
        <title>The sequence of the genome of adenovirus type 5 and its comparison with the genome of adenovirus type 2.</title>
        <authorList>
            <person name="Chroboczek J."/>
            <person name="Bieber F."/>
            <person name="Jacrot B."/>
        </authorList>
    </citation>
    <scope>NUCLEOTIDE SEQUENCE [GENOMIC DNA]</scope>
</reference>
<reference key="3">
    <citation type="journal article" date="2012" name="Nat. Methods">
        <title>De novo derivation of proteomes from transcriptomes for transcript and protein identification.</title>
        <authorList>
            <person name="Evans V.C."/>
            <person name="Barker G."/>
            <person name="Heesom K.J."/>
            <person name="Fan J."/>
            <person name="Bessant C."/>
            <person name="Matthews D.A."/>
        </authorList>
    </citation>
    <scope>NUCLEOTIDE SEQUENCE [MRNA]</scope>
</reference>
<reference key="4">
    <citation type="journal article" date="1982" name="J. Gen. Virol.">
        <title>Nucleic acid-binding properties of adenovirus structural polypeptides.</title>
        <authorList>
            <person name="Russell W.C."/>
            <person name="Precious B."/>
        </authorList>
    </citation>
    <scope>DNA-BINDING</scope>
</reference>
<reference key="5">
    <citation type="journal article" date="2012" name="J. Virol.">
        <title>The adenovirus L4-22K Protein is multifunctional and is an integral component of crucial aspects of infection.</title>
        <authorList>
            <person name="Wu K."/>
            <person name="Orozco D."/>
            <person name="Hearing P."/>
        </authorList>
    </citation>
    <scope>IDENTIFICATION IN THE PACKAGING COMPLEX</scope>
</reference>
<reference key="6">
    <citation type="journal article" date="2012" name="Viruses">
        <title>Latest insights on adenovirus structure and assembly.</title>
        <authorList>
            <person name="San Martin C."/>
        </authorList>
    </citation>
    <scope>REVIEW</scope>
</reference>
<reference key="7">
    <citation type="journal article" date="2013" name="J. Gen. Virol.">
        <title>Adenoviral E2 IVa2 protein interacts with L4 33K protein and E2 DNA-binding protein.</title>
        <authorList>
            <person name="Ahi Y.S."/>
            <person name="Vemula S.V."/>
            <person name="Mittal S.K."/>
        </authorList>
    </citation>
    <scope>INTERACTION WITH 33K PROTEIN</scope>
</reference>
<reference key="8">
    <citation type="journal article" date="2015" name="Front. Microbiol.">
        <title>Adenoviral L4 33K forms ring-like oligomers and stimulates ATPase activity of IVa2: implications in viral genome packaging.</title>
        <authorList>
            <person name="Ahi Y.S."/>
            <person name="Vemula S.V."/>
            <person name="Hassan A.O."/>
            <person name="Costakes G."/>
            <person name="Stauffacher C."/>
            <person name="Mittal S.K."/>
        </authorList>
    </citation>
    <scope>FUNCTION</scope>
</reference>
<evidence type="ECO:0000255" key="1">
    <source>
        <dbReference type="HAMAP-Rule" id="MF_04057"/>
    </source>
</evidence>
<evidence type="ECO:0000256" key="2">
    <source>
        <dbReference type="SAM" id="MobiDB-lite"/>
    </source>
</evidence>
<evidence type="ECO:0000269" key="3">
    <source>
    </source>
</evidence>
<evidence type="ECO:0000269" key="4">
    <source>
    </source>
</evidence>
<evidence type="ECO:0000269" key="5">
    <source>
    </source>
</evidence>
<organism>
    <name type="scientific">Human adenovirus C serotype 5</name>
    <name type="common">HAdV-5</name>
    <name type="synonym">Human adenovirus 5</name>
    <dbReference type="NCBI Taxonomy" id="28285"/>
    <lineage>
        <taxon>Viruses</taxon>
        <taxon>Varidnaviria</taxon>
        <taxon>Bamfordvirae</taxon>
        <taxon>Preplasmiviricota</taxon>
        <taxon>Tectiliviricetes</taxon>
        <taxon>Rowavirales</taxon>
        <taxon>Adenoviridae</taxon>
        <taxon>Mastadenovirus</taxon>
        <taxon>Human mastadenovirus C</taxon>
    </lineage>
</organism>
<organismHost>
    <name type="scientific">Homo sapiens</name>
    <name type="common">Human</name>
    <dbReference type="NCBI Taxonomy" id="9606"/>
</organismHost>
<proteinExistence type="evidence at protein level"/>
<comment type="function">
    <text evidence="1 5">Component of the packaging machinery which encapsidates the viral DNA into preformed capsids and transcriptional activator of the viral major late promoter (MLP). Binds, along with packaging proteins 2 and 3, to the specific packaging sequence on the left end of viral genomic DNA and displays ATPase activity thereby providing the power stroke of the packaging machinery. The activity of packaging protein IVa2 is stimulated by protein 33K which acts as a terminase. May be the protein that pumps DNA into the capsid powered by ATP hydrolysis. Specifically binds to the 5'-CG-3' nucleotides of the repeats making up the packaging sequence. Component of the DEF-A and DEF-B transcription factors that bind downstream elements of the major late promoter (MLP), and stimulate transcription from the MLP after initiation of viral DNA replication. DEF-A is a heterodimer packaging proteins 1 and 2 and DEF-B is a homodimer of packaging protein 1.</text>
</comment>
<comment type="subunit">
    <text evidence="1 3 4">Homodimer (By similarity). Part of a genome packaging complex composed of packaging proteins 1, 2 and 3; this complex specifically binds to the packaging sequence on the left end of viral genomic DNA and performs packaging of the viral genome (PubMed:22811519). Interacts with protein 33K (PubMed:23388198).</text>
</comment>
<comment type="subcellular location">
    <subcellularLocation>
        <location evidence="1">Virion</location>
    </subcellularLocation>
    <subcellularLocation>
        <location evidence="1">Host nucleus</location>
        <location evidence="1">Host nucleoplasm</location>
    </subcellularLocation>
    <subcellularLocation>
        <location evidence="1">Host nucleus</location>
        <location evidence="1">Host nucleolus</location>
    </subcellularLocation>
    <text evidence="1">Located at a unique vertex of the capsid. Present in about 6-8 copies per virion.</text>
</comment>
<comment type="induction">
    <text evidence="1">Expressed in the intermediate phase of the viral replicative cycle.</text>
</comment>
<comment type="similarity">
    <text evidence="1">Belongs to the adenoviridae packaging protein 1 family.</text>
</comment>
<accession>P03271</accession>
<gene>
    <name evidence="1" type="primary">IVa2</name>
</gene>
<dbReference type="EMBL" id="M73260">
    <property type="status" value="NOT_ANNOTATED_CDS"/>
    <property type="molecule type" value="Genomic_DNA"/>
</dbReference>
<dbReference type="EMBL" id="X02996">
    <property type="protein sequence ID" value="CAB40667.1"/>
    <property type="molecule type" value="Genomic_DNA"/>
</dbReference>
<dbReference type="PIR" id="A03842">
    <property type="entry name" value="Q4ADA5"/>
</dbReference>
<dbReference type="RefSeq" id="AP_000201.1">
    <property type="nucleotide sequence ID" value="AC_000008.1"/>
</dbReference>
<dbReference type="Proteomes" id="UP000004992">
    <property type="component" value="Genome"/>
</dbReference>
<dbReference type="GO" id="GO:0044196">
    <property type="term" value="C:host cell nucleolus"/>
    <property type="evidence" value="ECO:0007669"/>
    <property type="project" value="UniProtKB-SubCell"/>
</dbReference>
<dbReference type="GO" id="GO:0044095">
    <property type="term" value="C:host cell nucleoplasm"/>
    <property type="evidence" value="ECO:0007669"/>
    <property type="project" value="UniProtKB-SubCell"/>
</dbReference>
<dbReference type="GO" id="GO:0019028">
    <property type="term" value="C:viral capsid"/>
    <property type="evidence" value="ECO:0000314"/>
    <property type="project" value="CACAO"/>
</dbReference>
<dbReference type="GO" id="GO:0046798">
    <property type="term" value="C:viral portal complex"/>
    <property type="evidence" value="ECO:0000314"/>
    <property type="project" value="CACAO"/>
</dbReference>
<dbReference type="GO" id="GO:0005524">
    <property type="term" value="F:ATP binding"/>
    <property type="evidence" value="ECO:0007669"/>
    <property type="project" value="UniProtKB-UniRule"/>
</dbReference>
<dbReference type="GO" id="GO:0003677">
    <property type="term" value="F:DNA binding"/>
    <property type="evidence" value="ECO:0007669"/>
    <property type="project" value="UniProtKB-UniRule"/>
</dbReference>
<dbReference type="GO" id="GO:0006351">
    <property type="term" value="P:DNA-templated transcription"/>
    <property type="evidence" value="ECO:0007669"/>
    <property type="project" value="UniProtKB-UniRule"/>
</dbReference>
<dbReference type="GO" id="GO:0039708">
    <property type="term" value="P:nuclear capsid assembly"/>
    <property type="evidence" value="ECO:0007669"/>
    <property type="project" value="UniProtKB-UniRule"/>
</dbReference>
<dbReference type="GO" id="GO:0006355">
    <property type="term" value="P:regulation of DNA-templated transcription"/>
    <property type="evidence" value="ECO:0007669"/>
    <property type="project" value="UniProtKB-UniRule"/>
</dbReference>
<dbReference type="GO" id="GO:0019073">
    <property type="term" value="P:viral DNA genome packaging"/>
    <property type="evidence" value="ECO:0000314"/>
    <property type="project" value="UniProtKB"/>
</dbReference>
<dbReference type="GO" id="GO:0098035">
    <property type="term" value="P:viral DNA genome packaging via site-specific sequence recognition"/>
    <property type="evidence" value="ECO:0007669"/>
    <property type="project" value="UniProtKB-UniRule"/>
</dbReference>
<dbReference type="GO" id="GO:0019076">
    <property type="term" value="P:viral release from host cell"/>
    <property type="evidence" value="ECO:0007669"/>
    <property type="project" value="UniProtKB-UniRule"/>
</dbReference>
<dbReference type="GO" id="GO:0019083">
    <property type="term" value="P:viral transcription"/>
    <property type="evidence" value="ECO:0007669"/>
    <property type="project" value="UniProtKB-UniRule"/>
</dbReference>
<dbReference type="HAMAP" id="MF_04057">
    <property type="entry name" value="ADV_PKG1"/>
    <property type="match status" value="1"/>
</dbReference>
<dbReference type="InterPro" id="IPR003389">
    <property type="entry name" value="Adeno_IVa2"/>
</dbReference>
<dbReference type="InterPro" id="IPR027417">
    <property type="entry name" value="P-loop_NTPase"/>
</dbReference>
<dbReference type="Pfam" id="PF02456">
    <property type="entry name" value="Adeno_IVa2"/>
    <property type="match status" value="1"/>
</dbReference>
<dbReference type="SUPFAM" id="SSF52540">
    <property type="entry name" value="P-loop containing nucleoside triphosphate hydrolases"/>
    <property type="match status" value="1"/>
</dbReference>
<keyword id="KW-0010">Activator</keyword>
<keyword id="KW-0067">ATP-binding</keyword>
<keyword id="KW-0238">DNA-binding</keyword>
<keyword id="KW-1048">Host nucleus</keyword>
<keyword id="KW-0547">Nucleotide-binding</keyword>
<keyword id="KW-0597">Phosphoprotein</keyword>
<keyword id="KW-1185">Reference proteome</keyword>
<keyword id="KW-0804">Transcription</keyword>
<keyword id="KW-0805">Transcription regulation</keyword>
<keyword id="KW-0231">Viral genome packaging</keyword>
<keyword id="KW-1188">Viral release from host cell</keyword>
<keyword id="KW-0946">Virion</keyword>